<keyword id="KW-0963">Cytoplasm</keyword>
<keyword id="KW-0342">GTP-binding</keyword>
<keyword id="KW-0396">Initiation factor</keyword>
<keyword id="KW-0547">Nucleotide-binding</keyword>
<keyword id="KW-0648">Protein biosynthesis</keyword>
<keyword id="KW-1185">Reference proteome</keyword>
<gene>
    <name evidence="2" type="primary">infB</name>
    <name type="ordered locus">AHA_3303</name>
</gene>
<feature type="chain" id="PRO_1000008191" description="Translation initiation factor IF-2">
    <location>
        <begin position="1"/>
        <end position="897"/>
    </location>
</feature>
<feature type="domain" description="tr-type G">
    <location>
        <begin position="397"/>
        <end position="566"/>
    </location>
</feature>
<feature type="region of interest" description="Disordered" evidence="3">
    <location>
        <begin position="69"/>
        <end position="88"/>
    </location>
</feature>
<feature type="region of interest" description="Disordered" evidence="3">
    <location>
        <begin position="95"/>
        <end position="304"/>
    </location>
</feature>
<feature type="region of interest" description="G1" evidence="1">
    <location>
        <begin position="406"/>
        <end position="413"/>
    </location>
</feature>
<feature type="region of interest" description="G2" evidence="1">
    <location>
        <begin position="431"/>
        <end position="435"/>
    </location>
</feature>
<feature type="region of interest" description="G3" evidence="1">
    <location>
        <begin position="452"/>
        <end position="455"/>
    </location>
</feature>
<feature type="region of interest" description="G4" evidence="1">
    <location>
        <begin position="506"/>
        <end position="509"/>
    </location>
</feature>
<feature type="region of interest" description="G5" evidence="1">
    <location>
        <begin position="542"/>
        <end position="544"/>
    </location>
</feature>
<feature type="compositionally biased region" description="Basic and acidic residues" evidence="3">
    <location>
        <begin position="101"/>
        <end position="161"/>
    </location>
</feature>
<feature type="compositionally biased region" description="Low complexity" evidence="3">
    <location>
        <begin position="162"/>
        <end position="179"/>
    </location>
</feature>
<feature type="compositionally biased region" description="Basic and acidic residues" evidence="3">
    <location>
        <begin position="180"/>
        <end position="196"/>
    </location>
</feature>
<feature type="compositionally biased region" description="Basic and acidic residues" evidence="3">
    <location>
        <begin position="203"/>
        <end position="217"/>
    </location>
</feature>
<feature type="compositionally biased region" description="Basic and acidic residues" evidence="3">
    <location>
        <begin position="226"/>
        <end position="239"/>
    </location>
</feature>
<feature type="compositionally biased region" description="Basic and acidic residues" evidence="3">
    <location>
        <begin position="277"/>
        <end position="286"/>
    </location>
</feature>
<feature type="compositionally biased region" description="Basic residues" evidence="3">
    <location>
        <begin position="287"/>
        <end position="296"/>
    </location>
</feature>
<feature type="binding site" evidence="2">
    <location>
        <begin position="406"/>
        <end position="413"/>
    </location>
    <ligand>
        <name>GTP</name>
        <dbReference type="ChEBI" id="CHEBI:37565"/>
    </ligand>
</feature>
<feature type="binding site" evidence="2">
    <location>
        <begin position="452"/>
        <end position="456"/>
    </location>
    <ligand>
        <name>GTP</name>
        <dbReference type="ChEBI" id="CHEBI:37565"/>
    </ligand>
</feature>
<feature type="binding site" evidence="2">
    <location>
        <begin position="506"/>
        <end position="509"/>
    </location>
    <ligand>
        <name>GTP</name>
        <dbReference type="ChEBI" id="CHEBI:37565"/>
    </ligand>
</feature>
<proteinExistence type="inferred from homology"/>
<reference key="1">
    <citation type="journal article" date="2006" name="J. Bacteriol.">
        <title>Genome sequence of Aeromonas hydrophila ATCC 7966T: jack of all trades.</title>
        <authorList>
            <person name="Seshadri R."/>
            <person name="Joseph S.W."/>
            <person name="Chopra A.K."/>
            <person name="Sha J."/>
            <person name="Shaw J."/>
            <person name="Graf J."/>
            <person name="Haft D.H."/>
            <person name="Wu M."/>
            <person name="Ren Q."/>
            <person name="Rosovitz M.J."/>
            <person name="Madupu R."/>
            <person name="Tallon L."/>
            <person name="Kim M."/>
            <person name="Jin S."/>
            <person name="Vuong H."/>
            <person name="Stine O.C."/>
            <person name="Ali A."/>
            <person name="Horneman A.J."/>
            <person name="Heidelberg J.F."/>
        </authorList>
    </citation>
    <scope>NUCLEOTIDE SEQUENCE [LARGE SCALE GENOMIC DNA]</scope>
    <source>
        <strain>ATCC 7966 / DSM 30187 / BCRC 13018 / CCUG 14551 / JCM 1027 / KCTC 2358 / NCIMB 9240 / NCTC 8049</strain>
    </source>
</reference>
<organism>
    <name type="scientific">Aeromonas hydrophila subsp. hydrophila (strain ATCC 7966 / DSM 30187 / BCRC 13018 / CCUG 14551 / JCM 1027 / KCTC 2358 / NCIMB 9240 / NCTC 8049)</name>
    <dbReference type="NCBI Taxonomy" id="380703"/>
    <lineage>
        <taxon>Bacteria</taxon>
        <taxon>Pseudomonadati</taxon>
        <taxon>Pseudomonadota</taxon>
        <taxon>Gammaproteobacteria</taxon>
        <taxon>Aeromonadales</taxon>
        <taxon>Aeromonadaceae</taxon>
        <taxon>Aeromonas</taxon>
    </lineage>
</organism>
<sequence length="897" mass="98170">MAEVSVKQLATDIDTPVDRLLQQFVDAGISKSKADDMVSESEKQTLLAHLKKQHGGDEVAAPARMTLQRKTKSTISVQGTGGKNKEVQVEVRKSRTYVRRSALEDEQRQAEAEETARLEAEEKARREAEEKARLDAEEKARREAEQARREAEEKARIEAQQKARQAQQPAKAAGSTAQQEAEKMAKREAEELKRQQEQAALTKAEELAAKKAEEARVMAEQNAARWAEEEAARAKESSDYHLTTNKHAQAAEDELDRKEETSRRTAAAAKGPKKAGRREDDRDARNPRARKGKRGKVATPNAMKHGFNKPAAAVNRDVVIGETITVAELANKMAVKGVEVIKVMMKMGAMATINQVIDQETAQLVAEEMGHKVVLRRENELEEAVLSDRDETSEAKPRAPVVTIMGHVDHGKTSLLDYIRKAKVAAGEAGGITQHIGAYHVETDSGMITFLDTPGHAAFTSMRARGAKATDIVVLVVAADDGVMPQTIEAIQHAKAAEVPLVVAVNKIDKPEADPDRVKTELARYNVMSEDWGGDCQFVHVSAKSGQGIDDLLEAILIQSEVLELKAVVDGMANGVVIESFLDKGRGPVATVLVQEGTLRQGDIVLCGLEYGRVRAMRDELGREIKEAGPSLPVEILGLSGVPSAGDEATVVRDEKKAREVALYRQGKFREVKLARQQKAKLENMFANMTEGEVSEVNVVIKADVQGSVEAICDALVKLSTDEVKVKIVGSGVGGITETDATLAAASSAILVGFNVRADASARKVIEAESLDLRYYSVIYDLIDEVKQAMSGMLAPEYRQEIIGLAEVRSVFKSPKFGAVAGCMVTEGVVKRSNRIRVLRDNVVIYEGELESLRRFKDDVNEVKNGYECGIAVKNYNDVREGDQIEVYETVEIQRTL</sequence>
<evidence type="ECO:0000250" key="1"/>
<evidence type="ECO:0000255" key="2">
    <source>
        <dbReference type="HAMAP-Rule" id="MF_00100"/>
    </source>
</evidence>
<evidence type="ECO:0000256" key="3">
    <source>
        <dbReference type="SAM" id="MobiDB-lite"/>
    </source>
</evidence>
<dbReference type="EMBL" id="CP000462">
    <property type="protein sequence ID" value="ABK38444.1"/>
    <property type="molecule type" value="Genomic_DNA"/>
</dbReference>
<dbReference type="RefSeq" id="WP_011707074.1">
    <property type="nucleotide sequence ID" value="NC_008570.1"/>
</dbReference>
<dbReference type="RefSeq" id="YP_857794.1">
    <property type="nucleotide sequence ID" value="NC_008570.1"/>
</dbReference>
<dbReference type="SMR" id="A0KNE3"/>
<dbReference type="STRING" id="380703.AHA_3303"/>
<dbReference type="EnsemblBacteria" id="ABK38444">
    <property type="protein sequence ID" value="ABK38444"/>
    <property type="gene ID" value="AHA_3303"/>
</dbReference>
<dbReference type="GeneID" id="4490965"/>
<dbReference type="KEGG" id="aha:AHA_3303"/>
<dbReference type="PATRIC" id="fig|380703.7.peg.3299"/>
<dbReference type="eggNOG" id="COG0532">
    <property type="taxonomic scope" value="Bacteria"/>
</dbReference>
<dbReference type="HOGENOM" id="CLU_006301_6_3_6"/>
<dbReference type="OrthoDB" id="9811804at2"/>
<dbReference type="Proteomes" id="UP000000756">
    <property type="component" value="Chromosome"/>
</dbReference>
<dbReference type="GO" id="GO:0005829">
    <property type="term" value="C:cytosol"/>
    <property type="evidence" value="ECO:0007669"/>
    <property type="project" value="TreeGrafter"/>
</dbReference>
<dbReference type="GO" id="GO:0005525">
    <property type="term" value="F:GTP binding"/>
    <property type="evidence" value="ECO:0007669"/>
    <property type="project" value="UniProtKB-KW"/>
</dbReference>
<dbReference type="GO" id="GO:0003924">
    <property type="term" value="F:GTPase activity"/>
    <property type="evidence" value="ECO:0007669"/>
    <property type="project" value="UniProtKB-UniRule"/>
</dbReference>
<dbReference type="GO" id="GO:0097216">
    <property type="term" value="F:guanosine tetraphosphate binding"/>
    <property type="evidence" value="ECO:0007669"/>
    <property type="project" value="UniProtKB-ARBA"/>
</dbReference>
<dbReference type="GO" id="GO:0003743">
    <property type="term" value="F:translation initiation factor activity"/>
    <property type="evidence" value="ECO:0007669"/>
    <property type="project" value="UniProtKB-UniRule"/>
</dbReference>
<dbReference type="CDD" id="cd01887">
    <property type="entry name" value="IF2_eIF5B"/>
    <property type="match status" value="1"/>
</dbReference>
<dbReference type="CDD" id="cd03702">
    <property type="entry name" value="IF2_mtIF2_II"/>
    <property type="match status" value="1"/>
</dbReference>
<dbReference type="CDD" id="cd03692">
    <property type="entry name" value="mtIF2_IVc"/>
    <property type="match status" value="1"/>
</dbReference>
<dbReference type="FunFam" id="2.40.30.10:FF:000007">
    <property type="entry name" value="Translation initiation factor IF-2"/>
    <property type="match status" value="1"/>
</dbReference>
<dbReference type="FunFam" id="2.40.30.10:FF:000008">
    <property type="entry name" value="Translation initiation factor IF-2"/>
    <property type="match status" value="1"/>
</dbReference>
<dbReference type="FunFam" id="3.40.50.10050:FF:000001">
    <property type="entry name" value="Translation initiation factor IF-2"/>
    <property type="match status" value="1"/>
</dbReference>
<dbReference type="FunFam" id="3.40.50.300:FF:000019">
    <property type="entry name" value="Translation initiation factor IF-2"/>
    <property type="match status" value="1"/>
</dbReference>
<dbReference type="Gene3D" id="3.40.50.300">
    <property type="entry name" value="P-loop containing nucleotide triphosphate hydrolases"/>
    <property type="match status" value="1"/>
</dbReference>
<dbReference type="Gene3D" id="3.30.56.50">
    <property type="entry name" value="Putative DNA-binding domain, N-terminal subdomain of bacterial translation initiation factor IF2"/>
    <property type="match status" value="1"/>
</dbReference>
<dbReference type="Gene3D" id="2.40.30.10">
    <property type="entry name" value="Translation factors"/>
    <property type="match status" value="2"/>
</dbReference>
<dbReference type="Gene3D" id="3.40.50.10050">
    <property type="entry name" value="Translation initiation factor IF- 2, domain 3"/>
    <property type="match status" value="1"/>
</dbReference>
<dbReference type="HAMAP" id="MF_00100_B">
    <property type="entry name" value="IF_2_B"/>
    <property type="match status" value="1"/>
</dbReference>
<dbReference type="InterPro" id="IPR009061">
    <property type="entry name" value="DNA-bd_dom_put_sf"/>
</dbReference>
<dbReference type="InterPro" id="IPR053905">
    <property type="entry name" value="EF-G-like_DII"/>
</dbReference>
<dbReference type="InterPro" id="IPR004161">
    <property type="entry name" value="EFTu-like_2"/>
</dbReference>
<dbReference type="InterPro" id="IPR013575">
    <property type="entry name" value="IF2_assoc_dom_bac"/>
</dbReference>
<dbReference type="InterPro" id="IPR044145">
    <property type="entry name" value="IF2_II"/>
</dbReference>
<dbReference type="InterPro" id="IPR006847">
    <property type="entry name" value="IF2_N"/>
</dbReference>
<dbReference type="InterPro" id="IPR027417">
    <property type="entry name" value="P-loop_NTPase"/>
</dbReference>
<dbReference type="InterPro" id="IPR005225">
    <property type="entry name" value="Small_GTP-bd"/>
</dbReference>
<dbReference type="InterPro" id="IPR000795">
    <property type="entry name" value="T_Tr_GTP-bd_dom"/>
</dbReference>
<dbReference type="InterPro" id="IPR000178">
    <property type="entry name" value="TF_IF2_bacterial-like"/>
</dbReference>
<dbReference type="InterPro" id="IPR015760">
    <property type="entry name" value="TIF_IF2"/>
</dbReference>
<dbReference type="InterPro" id="IPR023115">
    <property type="entry name" value="TIF_IF2_dom3"/>
</dbReference>
<dbReference type="InterPro" id="IPR036925">
    <property type="entry name" value="TIF_IF2_dom3_sf"/>
</dbReference>
<dbReference type="InterPro" id="IPR009000">
    <property type="entry name" value="Transl_B-barrel_sf"/>
</dbReference>
<dbReference type="NCBIfam" id="TIGR00487">
    <property type="entry name" value="IF-2"/>
    <property type="match status" value="1"/>
</dbReference>
<dbReference type="NCBIfam" id="TIGR00231">
    <property type="entry name" value="small_GTP"/>
    <property type="match status" value="1"/>
</dbReference>
<dbReference type="PANTHER" id="PTHR43381:SF5">
    <property type="entry name" value="TR-TYPE G DOMAIN-CONTAINING PROTEIN"/>
    <property type="match status" value="1"/>
</dbReference>
<dbReference type="PANTHER" id="PTHR43381">
    <property type="entry name" value="TRANSLATION INITIATION FACTOR IF-2-RELATED"/>
    <property type="match status" value="1"/>
</dbReference>
<dbReference type="Pfam" id="PF22042">
    <property type="entry name" value="EF-G_D2"/>
    <property type="match status" value="1"/>
</dbReference>
<dbReference type="Pfam" id="PF00009">
    <property type="entry name" value="GTP_EFTU"/>
    <property type="match status" value="1"/>
</dbReference>
<dbReference type="Pfam" id="PF03144">
    <property type="entry name" value="GTP_EFTU_D2"/>
    <property type="match status" value="1"/>
</dbReference>
<dbReference type="Pfam" id="PF11987">
    <property type="entry name" value="IF-2"/>
    <property type="match status" value="1"/>
</dbReference>
<dbReference type="Pfam" id="PF08364">
    <property type="entry name" value="IF2_assoc"/>
    <property type="match status" value="1"/>
</dbReference>
<dbReference type="Pfam" id="PF04760">
    <property type="entry name" value="IF2_N"/>
    <property type="match status" value="2"/>
</dbReference>
<dbReference type="SUPFAM" id="SSF52156">
    <property type="entry name" value="Initiation factor IF2/eIF5b, domain 3"/>
    <property type="match status" value="1"/>
</dbReference>
<dbReference type="SUPFAM" id="SSF52540">
    <property type="entry name" value="P-loop containing nucleoside triphosphate hydrolases"/>
    <property type="match status" value="1"/>
</dbReference>
<dbReference type="SUPFAM" id="SSF46955">
    <property type="entry name" value="Putative DNA-binding domain"/>
    <property type="match status" value="1"/>
</dbReference>
<dbReference type="SUPFAM" id="SSF50447">
    <property type="entry name" value="Translation proteins"/>
    <property type="match status" value="2"/>
</dbReference>
<dbReference type="PROSITE" id="PS51722">
    <property type="entry name" value="G_TR_2"/>
    <property type="match status" value="1"/>
</dbReference>
<dbReference type="PROSITE" id="PS01176">
    <property type="entry name" value="IF2"/>
    <property type="match status" value="1"/>
</dbReference>
<name>IF2_AERHH</name>
<accession>A0KNE3</accession>
<comment type="function">
    <text evidence="2">One of the essential components for the initiation of protein synthesis. Protects formylmethionyl-tRNA from spontaneous hydrolysis and promotes its binding to the 30S ribosomal subunits. Also involved in the hydrolysis of GTP during the formation of the 70S ribosomal complex.</text>
</comment>
<comment type="subcellular location">
    <subcellularLocation>
        <location evidence="2">Cytoplasm</location>
    </subcellularLocation>
</comment>
<comment type="similarity">
    <text evidence="2">Belongs to the TRAFAC class translation factor GTPase superfamily. Classic translation factor GTPase family. IF-2 subfamily.</text>
</comment>
<protein>
    <recommendedName>
        <fullName evidence="2">Translation initiation factor IF-2</fullName>
    </recommendedName>
</protein>